<organism>
    <name type="scientific">Xenopus laevis</name>
    <name type="common">African clawed frog</name>
    <dbReference type="NCBI Taxonomy" id="8355"/>
    <lineage>
        <taxon>Eukaryota</taxon>
        <taxon>Metazoa</taxon>
        <taxon>Chordata</taxon>
        <taxon>Craniata</taxon>
        <taxon>Vertebrata</taxon>
        <taxon>Euteleostomi</taxon>
        <taxon>Amphibia</taxon>
        <taxon>Batrachia</taxon>
        <taxon>Anura</taxon>
        <taxon>Pipoidea</taxon>
        <taxon>Pipidae</taxon>
        <taxon>Xenopodinae</taxon>
        <taxon>Xenopus</taxon>
        <taxon>Xenopus</taxon>
    </lineage>
</organism>
<accession>B0ZTE2</accession>
<keyword id="KW-0217">Developmental protein</keyword>
<keyword id="KW-0238">DNA-binding</keyword>
<keyword id="KW-0539">Nucleus</keyword>
<keyword id="KW-1185">Reference proteome</keyword>
<keyword id="KW-0678">Repressor</keyword>
<keyword id="KW-0804">Transcription</keyword>
<keyword id="KW-0805">Transcription regulation</keyword>
<protein>
    <recommendedName>
        <fullName evidence="1">Transcription factor Sox-14</fullName>
    </recommendedName>
    <alternativeName>
        <fullName>SRY (sex determining region Y)-box 14</fullName>
    </alternativeName>
</protein>
<proteinExistence type="evidence at transcript level"/>
<dbReference type="EMBL" id="EU403425">
    <property type="protein sequence ID" value="ABY90181.1"/>
    <property type="molecule type" value="Genomic_DNA"/>
</dbReference>
<dbReference type="SMR" id="B0ZTE2"/>
<dbReference type="KEGG" id="xla:100337614"/>
<dbReference type="AGR" id="Xenbase:XB-GENE-6458188"/>
<dbReference type="CTD" id="100337614"/>
<dbReference type="Xenbase" id="XB-GENE-6458188">
    <property type="gene designation" value="sox14.S"/>
</dbReference>
<dbReference type="OMA" id="ASAPYSC"/>
<dbReference type="OrthoDB" id="6247875at2759"/>
<dbReference type="Proteomes" id="UP000186698">
    <property type="component" value="Chromosome 5S"/>
</dbReference>
<dbReference type="Bgee" id="100337614">
    <property type="expression patterns" value="Expressed in brain and 1 other cell type or tissue"/>
</dbReference>
<dbReference type="GO" id="GO:0005634">
    <property type="term" value="C:nucleus"/>
    <property type="evidence" value="ECO:0000318"/>
    <property type="project" value="GO_Central"/>
</dbReference>
<dbReference type="GO" id="GO:0001228">
    <property type="term" value="F:DNA-binding transcription activator activity, RNA polymerase II-specific"/>
    <property type="evidence" value="ECO:0000318"/>
    <property type="project" value="GO_Central"/>
</dbReference>
<dbReference type="GO" id="GO:0000978">
    <property type="term" value="F:RNA polymerase II cis-regulatory region sequence-specific DNA binding"/>
    <property type="evidence" value="ECO:0000318"/>
    <property type="project" value="GO_Central"/>
</dbReference>
<dbReference type="GO" id="GO:0043565">
    <property type="term" value="F:sequence-specific DNA binding"/>
    <property type="evidence" value="ECO:0000250"/>
    <property type="project" value="UniProtKB"/>
</dbReference>
<dbReference type="GO" id="GO:0007420">
    <property type="term" value="P:brain development"/>
    <property type="evidence" value="ECO:0000318"/>
    <property type="project" value="GO_Central"/>
</dbReference>
<dbReference type="GO" id="GO:0045892">
    <property type="term" value="P:negative regulation of DNA-templated transcription"/>
    <property type="evidence" value="ECO:0000250"/>
    <property type="project" value="UniProtKB"/>
</dbReference>
<dbReference type="GO" id="GO:0000122">
    <property type="term" value="P:negative regulation of transcription by RNA polymerase II"/>
    <property type="evidence" value="ECO:0000250"/>
    <property type="project" value="UniProtKB"/>
</dbReference>
<dbReference type="GO" id="GO:0007399">
    <property type="term" value="P:nervous system development"/>
    <property type="evidence" value="ECO:0000270"/>
    <property type="project" value="UniProtKB"/>
</dbReference>
<dbReference type="GO" id="GO:0030182">
    <property type="term" value="P:neuron differentiation"/>
    <property type="evidence" value="ECO:0000318"/>
    <property type="project" value="GO_Central"/>
</dbReference>
<dbReference type="GO" id="GO:0045944">
    <property type="term" value="P:positive regulation of transcription by RNA polymerase II"/>
    <property type="evidence" value="ECO:0000318"/>
    <property type="project" value="GO_Central"/>
</dbReference>
<dbReference type="CDD" id="cd01388">
    <property type="entry name" value="HMG-box_SoxB"/>
    <property type="match status" value="1"/>
</dbReference>
<dbReference type="FunFam" id="1.10.30.10:FF:000002">
    <property type="entry name" value="transcription factor Sox-2"/>
    <property type="match status" value="1"/>
</dbReference>
<dbReference type="Gene3D" id="1.10.30.10">
    <property type="entry name" value="High mobility group box domain"/>
    <property type="match status" value="1"/>
</dbReference>
<dbReference type="InterPro" id="IPR009071">
    <property type="entry name" value="HMG_box_dom"/>
</dbReference>
<dbReference type="InterPro" id="IPR036910">
    <property type="entry name" value="HMG_box_dom_sf"/>
</dbReference>
<dbReference type="InterPro" id="IPR022097">
    <property type="entry name" value="SOX_fam"/>
</dbReference>
<dbReference type="InterPro" id="IPR050140">
    <property type="entry name" value="SRY-related_HMG-box_TF-like"/>
</dbReference>
<dbReference type="PANTHER" id="PTHR10270">
    <property type="entry name" value="SOX TRANSCRIPTION FACTOR"/>
    <property type="match status" value="1"/>
</dbReference>
<dbReference type="PANTHER" id="PTHR10270:SF107">
    <property type="entry name" value="TRANSCRIPTION FACTOR SOX-14"/>
    <property type="match status" value="1"/>
</dbReference>
<dbReference type="Pfam" id="PF00505">
    <property type="entry name" value="HMG_box"/>
    <property type="match status" value="1"/>
</dbReference>
<dbReference type="Pfam" id="PF12336">
    <property type="entry name" value="SOXp"/>
    <property type="match status" value="1"/>
</dbReference>
<dbReference type="SMART" id="SM00398">
    <property type="entry name" value="HMG"/>
    <property type="match status" value="1"/>
</dbReference>
<dbReference type="SUPFAM" id="SSF47095">
    <property type="entry name" value="HMG-box"/>
    <property type="match status" value="1"/>
</dbReference>
<dbReference type="PROSITE" id="PS50118">
    <property type="entry name" value="HMG_BOX_2"/>
    <property type="match status" value="1"/>
</dbReference>
<name>SOX14_XENLA</name>
<feature type="chain" id="PRO_0000378069" description="Transcription factor Sox-14">
    <location>
        <begin position="1"/>
        <end position="239"/>
    </location>
</feature>
<feature type="DNA-binding region" description="HMG box" evidence="2">
    <location>
        <begin position="8"/>
        <end position="76"/>
    </location>
</feature>
<comment type="function">
    <text evidence="1 3">Acts as a negative regulator of transcription (By similarity). May function as a switch in neuronal development.</text>
</comment>
<comment type="subcellular location">
    <subcellularLocation>
        <location evidence="1 2">Nucleus</location>
    </subcellularLocation>
</comment>
<comment type="tissue specificity">
    <text evidence="3">In the developing embryo, restricted to the hypothalamus, dorsal thalamus, optic tectum, a region of the somatic motornucleus in the midbrain and hindbrain, the vestibular nuclei in the hindbrain, and a discrete ventral domain in the developing spinal cord.</text>
</comment>
<comment type="developmental stage">
    <text evidence="3">First expressed at stage 25. Expression peaks at stage 28 and continues at this level throughout all later stages, until at least stage 38.</text>
</comment>
<evidence type="ECO:0000250" key="1">
    <source>
        <dbReference type="UniProtKB" id="Q9W7R6"/>
    </source>
</evidence>
<evidence type="ECO:0000255" key="2">
    <source>
        <dbReference type="PROSITE-ProRule" id="PRU00267"/>
    </source>
</evidence>
<evidence type="ECO:0000269" key="3">
    <source>
    </source>
</evidence>
<evidence type="ECO:0000305" key="4"/>
<evidence type="ECO:0000312" key="5">
    <source>
        <dbReference type="EMBL" id="ABY90181.1"/>
    </source>
</evidence>
<gene>
    <name evidence="5" type="primary">sox14</name>
</gene>
<sequence>MSKPVDHIKRPMNAFMVWSRGQRRKMAQENPKMHNSEISKRLGAEWKLLSEAEKRPYIDEAKRLRAQHMKEHPDYKYRPRRKPKNLLKKDRYVFPLPYFGDHDPLKTGLSMSATDSILGASEKARAFFPPTSTPYSLLDPSHFSSTTIQKMTEMPHTLATSTLPYASTLGYQNGAFGGLSCPSQHTHTHPSPTNPGYVVPCNCTAWSASNLQPPVAYILFPGMTKAGIDPYSSAHTTAM</sequence>
<reference evidence="4 5" key="1">
    <citation type="journal article" date="2008" name="Int. J. Dev. Biol.">
        <title>Cloning and developmental expression of the soxB2 genes, sox14 and sox21, during Xenopus laevis embryogenesis.</title>
        <authorList>
            <person name="Cunningham D.D."/>
            <person name="Meng Z."/>
            <person name="Fritzsch B."/>
            <person name="Casey E.S."/>
        </authorList>
    </citation>
    <scope>NUCLEOTIDE SEQUENCE [GENOMIC DNA]</scope>
    <scope>PUTATIVE FUNCTION</scope>
    <scope>TISSUE SPECIFICITY</scope>
    <scope>DEVELOPMENTAL STAGE</scope>
</reference>